<proteinExistence type="evidence at transcript level"/>
<protein>
    <recommendedName>
        <fullName evidence="5">Phosphatidylinositol 5-phosphate 4-kinase type-2 gamma</fullName>
        <ecNumber evidence="2">2.7.1.149</ecNumber>
    </recommendedName>
    <alternativeName>
        <fullName>Phosphatidylinositol 5-phosphate 4-kinase type II gamma</fullName>
        <shortName>PI(5)P 4-kinase type II gamma</shortName>
        <shortName>PIP4KII-gamma</shortName>
    </alternativeName>
</protein>
<dbReference type="EC" id="2.7.1.149" evidence="2"/>
<dbReference type="EMBL" id="CR762295">
    <property type="protein sequence ID" value="CAJ83604.1"/>
    <property type="status" value="ALT_INIT"/>
    <property type="molecule type" value="mRNA"/>
</dbReference>
<dbReference type="EMBL" id="BC074705">
    <property type="protein sequence ID" value="AAH74705.1"/>
    <property type="molecule type" value="mRNA"/>
</dbReference>
<dbReference type="RefSeq" id="NP_001005670.1">
    <property type="nucleotide sequence ID" value="NM_001005670.1"/>
</dbReference>
<dbReference type="SMR" id="Q6GL14"/>
<dbReference type="FunCoup" id="Q6GL14">
    <property type="interactions" value="2720"/>
</dbReference>
<dbReference type="STRING" id="8364.ENSXETP00000017324"/>
<dbReference type="PaxDb" id="8364-ENSXETP00000013678"/>
<dbReference type="DNASU" id="448167"/>
<dbReference type="GeneID" id="448167"/>
<dbReference type="KEGG" id="xtr:448167"/>
<dbReference type="AGR" id="Xenbase:XB-GENE-964849"/>
<dbReference type="CTD" id="79837"/>
<dbReference type="Xenbase" id="XB-GENE-964849">
    <property type="gene designation" value="pip4k2c"/>
</dbReference>
<dbReference type="eggNOG" id="KOG0229">
    <property type="taxonomic scope" value="Eukaryota"/>
</dbReference>
<dbReference type="InParanoid" id="Q6GL14"/>
<dbReference type="OMA" id="HEKWDIK"/>
<dbReference type="OrthoDB" id="20783at2759"/>
<dbReference type="Reactome" id="R-XTR-1660499">
    <property type="pathway name" value="Synthesis of PIPs at the plasma membrane"/>
</dbReference>
<dbReference type="Reactome" id="R-XTR-6811555">
    <property type="pathway name" value="PI5P Regulates TP53 Acetylation"/>
</dbReference>
<dbReference type="Reactome" id="R-XTR-6811558">
    <property type="pathway name" value="PI5P, PP2A and IER3 Regulate PI3K/AKT Signaling"/>
</dbReference>
<dbReference type="Reactome" id="R-XTR-8847453">
    <property type="pathway name" value="Synthesis of PIPs in the nucleus"/>
</dbReference>
<dbReference type="Proteomes" id="UP000008143">
    <property type="component" value="Chromosome 2"/>
</dbReference>
<dbReference type="GO" id="GO:0005783">
    <property type="term" value="C:endoplasmic reticulum"/>
    <property type="evidence" value="ECO:0007669"/>
    <property type="project" value="UniProtKB-SubCell"/>
</dbReference>
<dbReference type="GO" id="GO:0016308">
    <property type="term" value="F:1-phosphatidylinositol-4-phosphate 5-kinase activity"/>
    <property type="evidence" value="ECO:0000250"/>
    <property type="project" value="UniProtKB"/>
</dbReference>
<dbReference type="GO" id="GO:0016309">
    <property type="term" value="F:1-phosphatidylinositol-5-phosphate 4-kinase activity"/>
    <property type="evidence" value="ECO:0007669"/>
    <property type="project" value="UniProtKB-EC"/>
</dbReference>
<dbReference type="GO" id="GO:0005524">
    <property type="term" value="F:ATP binding"/>
    <property type="evidence" value="ECO:0007669"/>
    <property type="project" value="UniProtKB-KW"/>
</dbReference>
<dbReference type="GO" id="GO:1902635">
    <property type="term" value="P:1-phosphatidyl-1D-myo-inositol 4,5-bisphosphate biosynthetic process"/>
    <property type="evidence" value="ECO:0000250"/>
    <property type="project" value="UniProtKB"/>
</dbReference>
<dbReference type="CDD" id="cd17311">
    <property type="entry name" value="PIPKc_PIP5K2C"/>
    <property type="match status" value="1"/>
</dbReference>
<dbReference type="FunFam" id="3.30.800.10:FF:000002">
    <property type="entry name" value="Phosphatidylinositol 5-phosphate 4-kinase type-2 beta"/>
    <property type="match status" value="1"/>
</dbReference>
<dbReference type="FunFam" id="3.30.810.10:FF:000003">
    <property type="entry name" value="Phosphatidylinositol 5-phosphate 4-kinase type-2 beta"/>
    <property type="match status" value="1"/>
</dbReference>
<dbReference type="FunFam" id="3.30.810.10:FF:000004">
    <property type="entry name" value="Phosphatidylinositol 5-phosphate 4-kinase type-2 beta"/>
    <property type="match status" value="1"/>
</dbReference>
<dbReference type="Gene3D" id="3.30.810.10">
    <property type="entry name" value="2-Layer Sandwich"/>
    <property type="match status" value="2"/>
</dbReference>
<dbReference type="Gene3D" id="3.30.800.10">
    <property type="entry name" value="Phosphatidylinositol Phosphate Kinase II Beta"/>
    <property type="match status" value="1"/>
</dbReference>
<dbReference type="InterPro" id="IPR027483">
    <property type="entry name" value="PInositol-4-P-4/5-kinase_C_sf"/>
</dbReference>
<dbReference type="InterPro" id="IPR002498">
    <property type="entry name" value="PInositol-4-P-4/5-kinase_core"/>
</dbReference>
<dbReference type="InterPro" id="IPR027484">
    <property type="entry name" value="PInositol-4-P-5-kinase_N"/>
</dbReference>
<dbReference type="InterPro" id="IPR023610">
    <property type="entry name" value="PInositol-4/5-P-5/4-kinase"/>
</dbReference>
<dbReference type="PANTHER" id="PTHR23086:SF35">
    <property type="entry name" value="PHOSPHATIDYLINOSITOL 5-PHOSPHATE 4-KINASE TYPE-2 GAMMA"/>
    <property type="match status" value="1"/>
</dbReference>
<dbReference type="PANTHER" id="PTHR23086">
    <property type="entry name" value="PHOSPHATIDYLINOSITOL-4-PHOSPHATE 5-KINASE"/>
    <property type="match status" value="1"/>
</dbReference>
<dbReference type="Pfam" id="PF01504">
    <property type="entry name" value="PIP5K"/>
    <property type="match status" value="1"/>
</dbReference>
<dbReference type="SMART" id="SM00330">
    <property type="entry name" value="PIPKc"/>
    <property type="match status" value="1"/>
</dbReference>
<dbReference type="SUPFAM" id="SSF56104">
    <property type="entry name" value="SAICAR synthase-like"/>
    <property type="match status" value="1"/>
</dbReference>
<dbReference type="PROSITE" id="PS51455">
    <property type="entry name" value="PIPK"/>
    <property type="match status" value="1"/>
</dbReference>
<evidence type="ECO:0000250" key="1">
    <source>
        <dbReference type="UniProtKB" id="O88370"/>
    </source>
</evidence>
<evidence type="ECO:0000250" key="2">
    <source>
        <dbReference type="UniProtKB" id="Q8TBX8"/>
    </source>
</evidence>
<evidence type="ECO:0000255" key="3">
    <source>
        <dbReference type="PROSITE-ProRule" id="PRU00781"/>
    </source>
</evidence>
<evidence type="ECO:0000256" key="4">
    <source>
        <dbReference type="SAM" id="MobiDB-lite"/>
    </source>
</evidence>
<evidence type="ECO:0000305" key="5"/>
<sequence length="419" mass="47642">MSSSGAMPAVSSASSSAAVGILSATTAKTKTKKKHFVQQKVKVFRASDPLISVFMWGVNHSVNELIQVPVPVMLLPDDFKANSKIKVTNHLFNRENLPSHFKFKDYCPQVFRNLRERFGIDDQDFQASLTRSSPYCESEGHDGRFLLSYDKTLVIKEISSEDVADMHNILSHYHQHIVKCHGNTLLPQFLGMYRLSVDNEDSYIMVMRNMFSHRLTVHRKYDLKGSLVSREASDKEKIKELPTLKDMDFLNKSQKVYVDEEQKKNFMEKLKRDVDFLVQLKLMDYSLLLGIHEVFRAEQEEEEDLEEDHTENESSPHMNVGSYGTSPEGIAGYLNSHKPLGPGEFEPIIDVYAIKSSDNAPQKEVYFMGLIDILTHYDAKKKAAHAAKTVKHGAGAEISTVHPDQYGKRFLEFVTNIFA</sequence>
<feature type="chain" id="PRO_0000285756" description="Phosphatidylinositol 5-phosphate 4-kinase type-2 gamma">
    <location>
        <begin position="1"/>
        <end position="419"/>
    </location>
</feature>
<feature type="domain" description="PIPK" evidence="3">
    <location>
        <begin position="46"/>
        <end position="418"/>
    </location>
</feature>
<feature type="region of interest" description="Disordered" evidence="4">
    <location>
        <begin position="299"/>
        <end position="320"/>
    </location>
</feature>
<feature type="compositionally biased region" description="Acidic residues" evidence="4">
    <location>
        <begin position="299"/>
        <end position="310"/>
    </location>
</feature>
<keyword id="KW-0067">ATP-binding</keyword>
<keyword id="KW-0963">Cytoplasm</keyword>
<keyword id="KW-0256">Endoplasmic reticulum</keyword>
<keyword id="KW-0418">Kinase</keyword>
<keyword id="KW-0443">Lipid metabolism</keyword>
<keyword id="KW-0547">Nucleotide-binding</keyword>
<keyword id="KW-1185">Reference proteome</keyword>
<keyword id="KW-0808">Transferase</keyword>
<name>PI42C_XENTR</name>
<organism>
    <name type="scientific">Xenopus tropicalis</name>
    <name type="common">Western clawed frog</name>
    <name type="synonym">Silurana tropicalis</name>
    <dbReference type="NCBI Taxonomy" id="8364"/>
    <lineage>
        <taxon>Eukaryota</taxon>
        <taxon>Metazoa</taxon>
        <taxon>Chordata</taxon>
        <taxon>Craniata</taxon>
        <taxon>Vertebrata</taxon>
        <taxon>Euteleostomi</taxon>
        <taxon>Amphibia</taxon>
        <taxon>Batrachia</taxon>
        <taxon>Anura</taxon>
        <taxon>Pipoidea</taxon>
        <taxon>Pipidae</taxon>
        <taxon>Xenopodinae</taxon>
        <taxon>Xenopus</taxon>
        <taxon>Silurana</taxon>
    </lineage>
</organism>
<accession>Q6GL14</accession>
<accession>Q28EX3</accession>
<gene>
    <name type="primary">pip4k2c</name>
    <name type="synonym">pip5k2c</name>
    <name type="ORF">TGas097l11.1</name>
</gene>
<reference key="1">
    <citation type="submission" date="2006-10" db="EMBL/GenBank/DDBJ databases">
        <authorList>
            <consortium name="Sanger Xenopus tropicalis EST/cDNA project"/>
        </authorList>
    </citation>
    <scope>NUCLEOTIDE SEQUENCE [LARGE SCALE MRNA]</scope>
    <source>
        <tissue>Gastrula</tissue>
    </source>
</reference>
<reference key="2">
    <citation type="submission" date="2004-06" db="EMBL/GenBank/DDBJ databases">
        <authorList>
            <consortium name="NIH - Xenopus Gene Collection (XGC) project"/>
        </authorList>
    </citation>
    <scope>NUCLEOTIDE SEQUENCE [LARGE SCALE MRNA]</scope>
    <source>
        <tissue>Embryo</tissue>
    </source>
</reference>
<comment type="function">
    <text evidence="2">Phosphatidylinositol 5-phosphate 4-kinase with low enzymatic activity. May be a GTP sensor, has higher GTP-dependent kinase activity than ATP-dependent kinase activity.</text>
</comment>
<comment type="catalytic activity">
    <reaction evidence="2">
        <text>a 1,2-diacyl-sn-glycero-3-phospho-(1D-myo-inositol-5-phosphate) + ATP = a 1,2-diacyl-sn-glycero-3-phospho-(1D-myo-inositol-4,5-bisphosphate) + ADP + H(+)</text>
        <dbReference type="Rhea" id="RHEA:12280"/>
        <dbReference type="ChEBI" id="CHEBI:15378"/>
        <dbReference type="ChEBI" id="CHEBI:30616"/>
        <dbReference type="ChEBI" id="CHEBI:57795"/>
        <dbReference type="ChEBI" id="CHEBI:58456"/>
        <dbReference type="ChEBI" id="CHEBI:456216"/>
        <dbReference type="EC" id="2.7.1.149"/>
    </reaction>
    <physiologicalReaction direction="left-to-right" evidence="2">
        <dbReference type="Rhea" id="RHEA:12281"/>
    </physiologicalReaction>
</comment>
<comment type="catalytic activity">
    <reaction evidence="2">
        <text>1,2-dihexadecanoyl-sn-glycero-3-phospho-(1D-myo-inositol-5-phosphate) + ATP = 1,2-dihexadecanoyl-sn-glycero-3-phospho-(1D-myo-inositol-4,5-bisphosphate) + ADP + H(+)</text>
        <dbReference type="Rhea" id="RHEA:55992"/>
        <dbReference type="ChEBI" id="CHEBI:15378"/>
        <dbReference type="ChEBI" id="CHEBI:30616"/>
        <dbReference type="ChEBI" id="CHEBI:83423"/>
        <dbReference type="ChEBI" id="CHEBI:84968"/>
        <dbReference type="ChEBI" id="CHEBI:456216"/>
    </reaction>
    <physiologicalReaction direction="left-to-right" evidence="2">
        <dbReference type="Rhea" id="RHEA:55993"/>
    </physiologicalReaction>
</comment>
<comment type="catalytic activity">
    <reaction evidence="2">
        <text>1,2-dihexadecanoyl-sn-glycero-3-phospho-(1D-myo-inositol-5-phosphate) + GTP = 1,2-dihexadecanoyl-sn-glycero-3-phospho-(1D-myo-inositol-4,5-bisphosphate) + GDP + H(+)</text>
        <dbReference type="Rhea" id="RHEA:55964"/>
        <dbReference type="ChEBI" id="CHEBI:15378"/>
        <dbReference type="ChEBI" id="CHEBI:37565"/>
        <dbReference type="ChEBI" id="CHEBI:58189"/>
        <dbReference type="ChEBI" id="CHEBI:83423"/>
        <dbReference type="ChEBI" id="CHEBI:84968"/>
    </reaction>
    <physiologicalReaction direction="left-to-right" evidence="2">
        <dbReference type="Rhea" id="RHEA:55965"/>
    </physiologicalReaction>
</comment>
<comment type="subcellular location">
    <subcellularLocation>
        <location evidence="1">Endoplasmic reticulum</location>
    </subcellularLocation>
    <subcellularLocation>
        <location evidence="1">Cytoplasm</location>
    </subcellularLocation>
</comment>
<comment type="PTM">
    <text evidence="1">Phosphorylated, phosphorylation is induced by EGF.</text>
</comment>
<comment type="sequence caution" evidence="5">
    <conflict type="erroneous initiation">
        <sequence resource="EMBL-CDS" id="CAJ83604"/>
    </conflict>
    <text>Truncated N-terminus.</text>
</comment>